<feature type="chain" id="PRO_0000340163" description="Sugar fermentation stimulation protein homolog">
    <location>
        <begin position="1"/>
        <end position="245"/>
    </location>
</feature>
<accession>A4TPW0</accession>
<dbReference type="EMBL" id="CP000668">
    <property type="protein sequence ID" value="ABP41322.1"/>
    <property type="status" value="ALT_INIT"/>
    <property type="molecule type" value="Genomic_DNA"/>
</dbReference>
<dbReference type="RefSeq" id="WP_002228221.1">
    <property type="nucleotide sequence ID" value="NZ_CP009715.1"/>
</dbReference>
<dbReference type="SMR" id="A4TPW0"/>
<dbReference type="GeneID" id="57975313"/>
<dbReference type="KEGG" id="ypp:YPDSF_2960"/>
<dbReference type="PATRIC" id="fig|386656.14.peg.1405"/>
<dbReference type="GO" id="GO:0003677">
    <property type="term" value="F:DNA binding"/>
    <property type="evidence" value="ECO:0007669"/>
    <property type="project" value="InterPro"/>
</dbReference>
<dbReference type="CDD" id="cd22359">
    <property type="entry name" value="SfsA-like_bacterial"/>
    <property type="match status" value="1"/>
</dbReference>
<dbReference type="FunFam" id="2.40.50.580:FF:000001">
    <property type="entry name" value="Sugar fermentation stimulation protein A"/>
    <property type="match status" value="1"/>
</dbReference>
<dbReference type="FunFam" id="3.40.1350.60:FF:000001">
    <property type="entry name" value="Sugar fermentation stimulation protein A"/>
    <property type="match status" value="1"/>
</dbReference>
<dbReference type="Gene3D" id="2.40.50.580">
    <property type="match status" value="1"/>
</dbReference>
<dbReference type="Gene3D" id="3.40.1350.60">
    <property type="match status" value="1"/>
</dbReference>
<dbReference type="HAMAP" id="MF_00095">
    <property type="entry name" value="SfsA"/>
    <property type="match status" value="1"/>
</dbReference>
<dbReference type="InterPro" id="IPR005224">
    <property type="entry name" value="SfsA"/>
</dbReference>
<dbReference type="InterPro" id="IPR040452">
    <property type="entry name" value="SfsA_C"/>
</dbReference>
<dbReference type="InterPro" id="IPR041465">
    <property type="entry name" value="SfsA_N"/>
</dbReference>
<dbReference type="NCBIfam" id="TIGR00230">
    <property type="entry name" value="sfsA"/>
    <property type="match status" value="1"/>
</dbReference>
<dbReference type="PANTHER" id="PTHR30545">
    <property type="entry name" value="SUGAR FERMENTATION STIMULATION PROTEIN A"/>
    <property type="match status" value="1"/>
</dbReference>
<dbReference type="PANTHER" id="PTHR30545:SF2">
    <property type="entry name" value="SUGAR FERMENTATION STIMULATION PROTEIN A"/>
    <property type="match status" value="1"/>
</dbReference>
<dbReference type="Pfam" id="PF03749">
    <property type="entry name" value="SfsA"/>
    <property type="match status" value="1"/>
</dbReference>
<dbReference type="Pfam" id="PF17746">
    <property type="entry name" value="SfsA_N"/>
    <property type="match status" value="1"/>
</dbReference>
<comment type="similarity">
    <text evidence="1">Belongs to the SfsA family.</text>
</comment>
<comment type="sequence caution" evidence="2">
    <conflict type="erroneous initiation">
        <sequence resource="EMBL-CDS" id="ABP41322"/>
    </conflict>
</comment>
<reference key="1">
    <citation type="submission" date="2007-02" db="EMBL/GenBank/DDBJ databases">
        <title>Complete sequence of chromosome of Yersinia pestis Pestoides F.</title>
        <authorList>
            <consortium name="US DOE Joint Genome Institute"/>
            <person name="Copeland A."/>
            <person name="Lucas S."/>
            <person name="Lapidus A."/>
            <person name="Barry K."/>
            <person name="Detter J.C."/>
            <person name="Glavina del Rio T."/>
            <person name="Hammon N."/>
            <person name="Israni S."/>
            <person name="Dalin E."/>
            <person name="Tice H."/>
            <person name="Pitluck S."/>
            <person name="Di Bartolo G."/>
            <person name="Chain P."/>
            <person name="Malfatti S."/>
            <person name="Shin M."/>
            <person name="Vergez L."/>
            <person name="Schmutz J."/>
            <person name="Larimer F."/>
            <person name="Land M."/>
            <person name="Hauser L."/>
            <person name="Worsham P."/>
            <person name="Chu M."/>
            <person name="Bearden S."/>
            <person name="Garcia E."/>
            <person name="Richardson P."/>
        </authorList>
    </citation>
    <scope>NUCLEOTIDE SEQUENCE [LARGE SCALE GENOMIC DNA]</scope>
    <source>
        <strain>Pestoides F</strain>
    </source>
</reference>
<name>SFSA_YERPP</name>
<protein>
    <recommendedName>
        <fullName evidence="1">Sugar fermentation stimulation protein homolog</fullName>
    </recommendedName>
</protein>
<proteinExistence type="inferred from homology"/>
<sequence>MLQFTPPLQPATLILRYKRFLADIVTPAGEALTIHCANTGAMTGCATPGDTIWYSTSDNPKRKYPQSWELTQTQTGDWICVNTMRANELVNLAIEKNQIAELSGYNFVRKEVKYGEENSRIDLLLQAEDRRDCYIEVKSVTLLQQQCGYFPDAVTLRGQKHLRELQNRVVNGHRAVLFFAVLHTGIKQVAPARHIDRRYAELLVQAQQAGVEVICYGFQLSPDGIELNTRLPLLLDEMLSSENAE</sequence>
<organism>
    <name type="scientific">Yersinia pestis (strain Pestoides F)</name>
    <dbReference type="NCBI Taxonomy" id="386656"/>
    <lineage>
        <taxon>Bacteria</taxon>
        <taxon>Pseudomonadati</taxon>
        <taxon>Pseudomonadota</taxon>
        <taxon>Gammaproteobacteria</taxon>
        <taxon>Enterobacterales</taxon>
        <taxon>Yersiniaceae</taxon>
        <taxon>Yersinia</taxon>
    </lineage>
</organism>
<evidence type="ECO:0000255" key="1">
    <source>
        <dbReference type="HAMAP-Rule" id="MF_00095"/>
    </source>
</evidence>
<evidence type="ECO:0000305" key="2"/>
<gene>
    <name evidence="1" type="primary">sfsA</name>
    <name type="ordered locus">YPDSF_2960</name>
</gene>